<proteinExistence type="inferred from homology"/>
<accession>P0DMJ0</accession>
<accession>A0A096VHN5</accession>
<evidence type="ECO:0000250" key="1"/>
<evidence type="ECO:0000250" key="2">
    <source>
        <dbReference type="UniProtKB" id="P0DMI7"/>
    </source>
</evidence>
<evidence type="ECO:0000255" key="3"/>
<evidence type="ECO:0000303" key="4">
    <source>
    </source>
</evidence>
<evidence type="ECO:0000305" key="5"/>
<evidence type="ECO:0000305" key="6">
    <source>
    </source>
</evidence>
<reference key="1">
    <citation type="journal article" date="2012" name="Peptides">
        <title>A novel class of antimicrobial peptides from the scorpion Heterometrus spinifer.</title>
        <authorList>
            <person name="Nie Y."/>
            <person name="Zeng X.C."/>
            <person name="Yang Y."/>
            <person name="Luo F."/>
            <person name="Luo X."/>
            <person name="Wu S."/>
            <person name="Zhang L."/>
            <person name="Zhou J."/>
        </authorList>
    </citation>
    <scope>NUCLEOTIDE SEQUENCE [GENOMIC DNA / MRNA]</scope>
    <source>
        <tissue>Venom gland</tissue>
    </source>
</reference>
<protein>
    <recommendedName>
        <fullName evidence="4">Antimicrobial peptide HsAp4</fullName>
    </recommendedName>
</protein>
<comment type="function">
    <text evidence="2">Possesses antimicrobial activity against both Gram-negative and Gram-positive bacteria, as well as against the fungus C.tropicalis. Also possesses a relatively high hemolytic activity. May act by disrupting the integrity of the bacterial cell membrane.</text>
</comment>
<comment type="subcellular location">
    <subcellularLocation>
        <location evidence="6">Secreted</location>
    </subcellularLocation>
    <subcellularLocation>
        <location evidence="5">Target cell membrane</location>
    </subcellularLocation>
</comment>
<comment type="tissue specificity">
    <text evidence="5">Expressed by the venom gland.</text>
</comment>
<comment type="similarity">
    <text evidence="5">Belongs to the non-disulfide-bridged peptide (NDBP) superfamily. Medium-length antimicrobial peptide (group 3) family.</text>
</comment>
<sequence>MSRRRILILVLVTMLVKTMAGMESKWVETTYEIKKRSGTSEKERESGRLLGVVKRLIVGFRSPFRGRRAISEQT</sequence>
<keyword id="KW-0027">Amidation</keyword>
<keyword id="KW-0044">Antibiotic</keyword>
<keyword id="KW-0929">Antimicrobial</keyword>
<keyword id="KW-0165">Cleavage on pair of basic residues</keyword>
<keyword id="KW-0204">Cytolysis</keyword>
<keyword id="KW-0295">Fungicide</keyword>
<keyword id="KW-0472">Membrane</keyword>
<keyword id="KW-0964">Secreted</keyword>
<keyword id="KW-0732">Signal</keyword>
<keyword id="KW-1052">Target cell membrane</keyword>
<keyword id="KW-1053">Target membrane</keyword>
<dbReference type="EMBL" id="JX311704">
    <property type="protein sequence ID" value="AFR60587.1"/>
    <property type="molecule type" value="mRNA"/>
</dbReference>
<dbReference type="GO" id="GO:0005576">
    <property type="term" value="C:extracellular region"/>
    <property type="evidence" value="ECO:0007669"/>
    <property type="project" value="UniProtKB-SubCell"/>
</dbReference>
<dbReference type="GO" id="GO:0016020">
    <property type="term" value="C:membrane"/>
    <property type="evidence" value="ECO:0007669"/>
    <property type="project" value="UniProtKB-KW"/>
</dbReference>
<dbReference type="GO" id="GO:0044218">
    <property type="term" value="C:other organism cell membrane"/>
    <property type="evidence" value="ECO:0007669"/>
    <property type="project" value="UniProtKB-KW"/>
</dbReference>
<dbReference type="GO" id="GO:0042742">
    <property type="term" value="P:defense response to bacterium"/>
    <property type="evidence" value="ECO:0007669"/>
    <property type="project" value="UniProtKB-KW"/>
</dbReference>
<dbReference type="GO" id="GO:0050832">
    <property type="term" value="P:defense response to fungus"/>
    <property type="evidence" value="ECO:0007669"/>
    <property type="project" value="UniProtKB-KW"/>
</dbReference>
<dbReference type="GO" id="GO:0031640">
    <property type="term" value="P:killing of cells of another organism"/>
    <property type="evidence" value="ECO:0007669"/>
    <property type="project" value="UniProtKB-KW"/>
</dbReference>
<feature type="signal peptide" evidence="3">
    <location>
        <begin position="1"/>
        <end position="21"/>
    </location>
</feature>
<feature type="propeptide" id="PRO_0000429200" evidence="1">
    <location>
        <begin position="22"/>
        <end position="33"/>
    </location>
</feature>
<feature type="peptide" id="PRO_0000429201" description="Antimicrobial peptide HsAp4">
    <location>
        <begin position="37"/>
        <end position="65"/>
    </location>
</feature>
<feature type="propeptide" id="PRO_0000429202" evidence="1">
    <location>
        <begin position="69"/>
        <end position="74"/>
    </location>
</feature>
<feature type="modified residue" description="Arginine amide" evidence="1">
    <location>
        <position position="65"/>
    </location>
</feature>
<organism>
    <name type="scientific">Heterometrus spinifer</name>
    <name type="common">Asia giant forest scorpion</name>
    <name type="synonym">Malaysian black scorpion</name>
    <dbReference type="NCBI Taxonomy" id="118530"/>
    <lineage>
        <taxon>Eukaryota</taxon>
        <taxon>Metazoa</taxon>
        <taxon>Ecdysozoa</taxon>
        <taxon>Arthropoda</taxon>
        <taxon>Chelicerata</taxon>
        <taxon>Arachnida</taxon>
        <taxon>Scorpiones</taxon>
        <taxon>Iurida</taxon>
        <taxon>Scorpionoidea</taxon>
        <taxon>Scorpionidae</taxon>
        <taxon>Heterometrinae</taxon>
        <taxon>Heterometrus</taxon>
    </lineage>
</organism>
<name>NDB34_HETSP</name>